<sequence>MDLTDTQQAILALIAERIDADGVPPSQTEIARAFGFKGIRAAQYHLEALEHAGAIRRVPGQARGIRLAGQGAQTRTAPVSEVARDDVLRLPVLGRVAAGLPIGADIGSDDFVVLDRVFFSPSPDYLLKVQGDSMRDEGIFNGDLIGVHRTRDARSGQIVVARIDEEITVKLLKIGKDRIRLLPRNPDYAPIEVLPDQDFAIEGLYCGLLRPNR</sequence>
<organism>
    <name type="scientific">Xanthomonas axonopodis pv. citri (strain 306)</name>
    <dbReference type="NCBI Taxonomy" id="190486"/>
    <lineage>
        <taxon>Bacteria</taxon>
        <taxon>Pseudomonadati</taxon>
        <taxon>Pseudomonadota</taxon>
        <taxon>Gammaproteobacteria</taxon>
        <taxon>Lysobacterales</taxon>
        <taxon>Lysobacteraceae</taxon>
        <taxon>Xanthomonas</taxon>
    </lineage>
</organism>
<comment type="function">
    <text evidence="1">Represses a number of genes involved in the response to DNA damage (SOS response), including recA and lexA. In the presence of single-stranded DNA, RecA interacts with LexA causing an autocatalytic cleavage which disrupts the DNA-binding part of LexA, leading to derepression of the SOS regulon and eventually DNA repair.</text>
</comment>
<comment type="catalytic activity">
    <reaction evidence="1">
        <text>Hydrolysis of Ala-|-Gly bond in repressor LexA.</text>
        <dbReference type="EC" id="3.4.21.88"/>
    </reaction>
</comment>
<comment type="subunit">
    <text evidence="1">Homodimer.</text>
</comment>
<comment type="similarity">
    <text evidence="1">Belongs to the peptidase S24 family.</text>
</comment>
<reference key="1">
    <citation type="journal article" date="2002" name="Nature">
        <title>Comparison of the genomes of two Xanthomonas pathogens with differing host specificities.</title>
        <authorList>
            <person name="da Silva A.C.R."/>
            <person name="Ferro J.A."/>
            <person name="Reinach F.C."/>
            <person name="Farah C.S."/>
            <person name="Furlan L.R."/>
            <person name="Quaggio R.B."/>
            <person name="Monteiro-Vitorello C.B."/>
            <person name="Van Sluys M.A."/>
            <person name="Almeida N.F. Jr."/>
            <person name="Alves L.M.C."/>
            <person name="do Amaral A.M."/>
            <person name="Bertolini M.C."/>
            <person name="Camargo L.E.A."/>
            <person name="Camarotte G."/>
            <person name="Cannavan F."/>
            <person name="Cardozo J."/>
            <person name="Chambergo F."/>
            <person name="Ciapina L.P."/>
            <person name="Cicarelli R.M.B."/>
            <person name="Coutinho L.L."/>
            <person name="Cursino-Santos J.R."/>
            <person name="El-Dorry H."/>
            <person name="Faria J.B."/>
            <person name="Ferreira A.J.S."/>
            <person name="Ferreira R.C.C."/>
            <person name="Ferro M.I.T."/>
            <person name="Formighieri E.F."/>
            <person name="Franco M.C."/>
            <person name="Greggio C.C."/>
            <person name="Gruber A."/>
            <person name="Katsuyama A.M."/>
            <person name="Kishi L.T."/>
            <person name="Leite R.P."/>
            <person name="Lemos E.G.M."/>
            <person name="Lemos M.V.F."/>
            <person name="Locali E.C."/>
            <person name="Machado M.A."/>
            <person name="Madeira A.M.B.N."/>
            <person name="Martinez-Rossi N.M."/>
            <person name="Martins E.C."/>
            <person name="Meidanis J."/>
            <person name="Menck C.F.M."/>
            <person name="Miyaki C.Y."/>
            <person name="Moon D.H."/>
            <person name="Moreira L.M."/>
            <person name="Novo M.T.M."/>
            <person name="Okura V.K."/>
            <person name="Oliveira M.C."/>
            <person name="Oliveira V.R."/>
            <person name="Pereira H.A."/>
            <person name="Rossi A."/>
            <person name="Sena J.A.D."/>
            <person name="Silva C."/>
            <person name="de Souza R.F."/>
            <person name="Spinola L.A.F."/>
            <person name="Takita M.A."/>
            <person name="Tamura R.E."/>
            <person name="Teixeira E.C."/>
            <person name="Tezza R.I.D."/>
            <person name="Trindade dos Santos M."/>
            <person name="Truffi D."/>
            <person name="Tsai S.M."/>
            <person name="White F.F."/>
            <person name="Setubal J.C."/>
            <person name="Kitajima J.P."/>
        </authorList>
    </citation>
    <scope>NUCLEOTIDE SEQUENCE [LARGE SCALE GENOMIC DNA]</scope>
    <source>
        <strain>306</strain>
    </source>
</reference>
<proteinExistence type="inferred from homology"/>
<gene>
    <name evidence="1" type="primary">lexA2</name>
    <name type="ordered locus">XAC1739</name>
</gene>
<evidence type="ECO:0000255" key="1">
    <source>
        <dbReference type="HAMAP-Rule" id="MF_00015"/>
    </source>
</evidence>
<name>LEXA2_XANAC</name>
<protein>
    <recommendedName>
        <fullName evidence="1">LexA repressor 2</fullName>
        <ecNumber evidence="1">3.4.21.88</ecNumber>
    </recommendedName>
</protein>
<keyword id="KW-0068">Autocatalytic cleavage</keyword>
<keyword id="KW-0227">DNA damage</keyword>
<keyword id="KW-0234">DNA repair</keyword>
<keyword id="KW-0235">DNA replication</keyword>
<keyword id="KW-0238">DNA-binding</keyword>
<keyword id="KW-0378">Hydrolase</keyword>
<keyword id="KW-0678">Repressor</keyword>
<keyword id="KW-0742">SOS response</keyword>
<keyword id="KW-0804">Transcription</keyword>
<keyword id="KW-0805">Transcription regulation</keyword>
<dbReference type="EC" id="3.4.21.88" evidence="1"/>
<dbReference type="EMBL" id="AE008923">
    <property type="protein sequence ID" value="AAM36606.1"/>
    <property type="molecule type" value="Genomic_DNA"/>
</dbReference>
<dbReference type="SMR" id="P60511"/>
<dbReference type="MEROPS" id="S24.001"/>
<dbReference type="KEGG" id="xac:XAC1739"/>
<dbReference type="eggNOG" id="COG1974">
    <property type="taxonomic scope" value="Bacteria"/>
</dbReference>
<dbReference type="HOGENOM" id="CLU_066192_45_3_6"/>
<dbReference type="Proteomes" id="UP000000576">
    <property type="component" value="Chromosome"/>
</dbReference>
<dbReference type="CollecTF" id="EXPREG_00000b80"/>
<dbReference type="GO" id="GO:0032993">
    <property type="term" value="C:protein-DNA complex"/>
    <property type="evidence" value="ECO:0000315"/>
    <property type="project" value="CollecTF"/>
</dbReference>
<dbReference type="GO" id="GO:0001217">
    <property type="term" value="F:DNA-binding transcription repressor activity"/>
    <property type="evidence" value="ECO:0000315"/>
    <property type="project" value="CollecTF"/>
</dbReference>
<dbReference type="GO" id="GO:0004252">
    <property type="term" value="F:serine-type endopeptidase activity"/>
    <property type="evidence" value="ECO:0007669"/>
    <property type="project" value="UniProtKB-UniRule"/>
</dbReference>
<dbReference type="GO" id="GO:0000976">
    <property type="term" value="F:transcription cis-regulatory region binding"/>
    <property type="evidence" value="ECO:0000315"/>
    <property type="project" value="CollecTF"/>
</dbReference>
<dbReference type="GO" id="GO:0006281">
    <property type="term" value="P:DNA repair"/>
    <property type="evidence" value="ECO:0007669"/>
    <property type="project" value="UniProtKB-UniRule"/>
</dbReference>
<dbReference type="GO" id="GO:0006260">
    <property type="term" value="P:DNA replication"/>
    <property type="evidence" value="ECO:0007669"/>
    <property type="project" value="UniProtKB-UniRule"/>
</dbReference>
<dbReference type="GO" id="GO:0045892">
    <property type="term" value="P:negative regulation of DNA-templated transcription"/>
    <property type="evidence" value="ECO:0000270"/>
    <property type="project" value="CollecTF"/>
</dbReference>
<dbReference type="GO" id="GO:0006508">
    <property type="term" value="P:proteolysis"/>
    <property type="evidence" value="ECO:0007669"/>
    <property type="project" value="InterPro"/>
</dbReference>
<dbReference type="GO" id="GO:0009432">
    <property type="term" value="P:SOS response"/>
    <property type="evidence" value="ECO:0000270"/>
    <property type="project" value="CollecTF"/>
</dbReference>
<dbReference type="CDD" id="cd06529">
    <property type="entry name" value="S24_LexA-like"/>
    <property type="match status" value="1"/>
</dbReference>
<dbReference type="FunFam" id="1.10.10.10:FF:000009">
    <property type="entry name" value="LexA repressor"/>
    <property type="match status" value="1"/>
</dbReference>
<dbReference type="FunFam" id="2.10.109.10:FF:000001">
    <property type="entry name" value="LexA repressor"/>
    <property type="match status" value="1"/>
</dbReference>
<dbReference type="Gene3D" id="2.10.109.10">
    <property type="entry name" value="Umud Fragment, subunit A"/>
    <property type="match status" value="1"/>
</dbReference>
<dbReference type="Gene3D" id="1.10.10.10">
    <property type="entry name" value="Winged helix-like DNA-binding domain superfamily/Winged helix DNA-binding domain"/>
    <property type="match status" value="1"/>
</dbReference>
<dbReference type="HAMAP" id="MF_00015">
    <property type="entry name" value="LexA"/>
    <property type="match status" value="1"/>
</dbReference>
<dbReference type="InterPro" id="IPR006200">
    <property type="entry name" value="LexA"/>
</dbReference>
<dbReference type="InterPro" id="IPR039418">
    <property type="entry name" value="LexA-like"/>
</dbReference>
<dbReference type="InterPro" id="IPR036286">
    <property type="entry name" value="LexA/Signal_pep-like_sf"/>
</dbReference>
<dbReference type="InterPro" id="IPR006199">
    <property type="entry name" value="LexA_DNA-bd_dom"/>
</dbReference>
<dbReference type="InterPro" id="IPR050077">
    <property type="entry name" value="LexA_repressor"/>
</dbReference>
<dbReference type="InterPro" id="IPR006197">
    <property type="entry name" value="Peptidase_S24_LexA"/>
</dbReference>
<dbReference type="InterPro" id="IPR015927">
    <property type="entry name" value="Peptidase_S24_S26A/B/C"/>
</dbReference>
<dbReference type="InterPro" id="IPR036388">
    <property type="entry name" value="WH-like_DNA-bd_sf"/>
</dbReference>
<dbReference type="InterPro" id="IPR036390">
    <property type="entry name" value="WH_DNA-bd_sf"/>
</dbReference>
<dbReference type="NCBIfam" id="TIGR00498">
    <property type="entry name" value="lexA"/>
    <property type="match status" value="1"/>
</dbReference>
<dbReference type="PANTHER" id="PTHR33516">
    <property type="entry name" value="LEXA REPRESSOR"/>
    <property type="match status" value="1"/>
</dbReference>
<dbReference type="PANTHER" id="PTHR33516:SF2">
    <property type="entry name" value="LEXA REPRESSOR-RELATED"/>
    <property type="match status" value="1"/>
</dbReference>
<dbReference type="Pfam" id="PF01726">
    <property type="entry name" value="LexA_DNA_bind"/>
    <property type="match status" value="1"/>
</dbReference>
<dbReference type="Pfam" id="PF00717">
    <property type="entry name" value="Peptidase_S24"/>
    <property type="match status" value="1"/>
</dbReference>
<dbReference type="PRINTS" id="PR00726">
    <property type="entry name" value="LEXASERPTASE"/>
</dbReference>
<dbReference type="SUPFAM" id="SSF51306">
    <property type="entry name" value="LexA/Signal peptidase"/>
    <property type="match status" value="1"/>
</dbReference>
<dbReference type="SUPFAM" id="SSF46785">
    <property type="entry name" value="Winged helix' DNA-binding domain"/>
    <property type="match status" value="1"/>
</dbReference>
<accession>P60511</accession>
<accession>O86050</accession>
<feature type="chain" id="PRO_0000170106" description="LexA repressor 2">
    <location>
        <begin position="1"/>
        <end position="213"/>
    </location>
</feature>
<feature type="DNA-binding region" description="H-T-H motif" evidence="1">
    <location>
        <begin position="27"/>
        <end position="47"/>
    </location>
</feature>
<feature type="active site" description="For autocatalytic cleavage activity" evidence="1">
    <location>
        <position position="133"/>
    </location>
</feature>
<feature type="active site" description="For autocatalytic cleavage activity" evidence="1">
    <location>
        <position position="170"/>
    </location>
</feature>
<feature type="site" description="Cleavage; by autolysis" evidence="1">
    <location>
        <begin position="98"/>
        <end position="99"/>
    </location>
</feature>